<sequence length="952" mass="107115">MFKFFSSFGDSNEKEIRALEPLVDKINQLENSFTTLSDEALKAKTIEFRARLKNTFETTTAGIQEDITSTTAELAEAQKIADNSKQSRLKAKLESLNKDLSAKENTALNGILPEAFAAVREASRRTIGLRHYDVQLIGGIVLHHGKIAEMRTGEGKTLVATLPLYLNSLLGKGVHLVTVNDYLARRDAYWMGPVYHALGVSVSSIYPMQTPTEELPSRLFDPDYTSEIPGDPWTHFRPISRQEAYKADITYGTSTEFGFDYLRDNLRPDLAQCVQRDMNYAIVDEIDNLLIDEARTPLIISAPDTEAGKLYDVFARLSPRLVVVKDYEINEKDRNAELTEDGWANVEKLLSREGVMKGNSLYDPQNAPLIRHLRNALSAKEFYKKDHQYVVKEGEIIIIDEFTGRMMLGRRYSEGLHQAIEAKEHVKVQQESKTYATVTIQNLFRMYRKLCGMTGTAATEAEEFSKIYKLEVVIIPTNKPAVREDYGDQIYKDQSAKFKAVVNEIDEMRKLGRPVLVGTVSIENSEMLSNMLKRQGIEHKVLNAKQHEKEAQVVAEAGKPGAVTVATNMAGRGVDILLGGKEPTKDDAKVYNEWQAHHQQVLEAGGLHVIGTERHESRRIDNQLRGRSGRQGDPGSSRFYVALDDDIMRRFGSERIQGIMEWAGMDENTPIENGLVSRTLENAQKRVEGYHFDVRKHLVEYDDVVNKHREVIYAERRKILSGADLKSNILDMIREEIITQTAEHTRGYDSSEWNLDGLVTHLNGIFTLPAEINAEALAKLSQEEITDLLTRTAEELYQKKEDETGAGSMRLLERIIMLHTLDSLWVEHLTIMENLRREIGLQAFAQRDPLIAYKNEGHVRFQELLETIKHDVVHNIYRVGIQIQHQTESATAKAASRPVQQQKPLPAAPAAAIPGVSAKAATQSTTPAAKEIGRNDPCPCGSGKKYKKCCGK</sequence>
<reference key="1">
    <citation type="journal article" date="2005" name="Nat. Biotechnol.">
        <title>Genome sequence of the chlorinated compound-respiring bacterium Dehalococcoides species strain CBDB1.</title>
        <authorList>
            <person name="Kube M."/>
            <person name="Beck A."/>
            <person name="Zinder S.H."/>
            <person name="Kuhl H."/>
            <person name="Reinhardt R."/>
            <person name="Adrian L."/>
        </authorList>
    </citation>
    <scope>NUCLEOTIDE SEQUENCE [LARGE SCALE GENOMIC DNA]</scope>
    <source>
        <strain>CBDB1</strain>
    </source>
</reference>
<dbReference type="EC" id="7.4.2.8" evidence="1"/>
<dbReference type="EMBL" id="AJ965256">
    <property type="protein sequence ID" value="CAI82599.1"/>
    <property type="molecule type" value="Genomic_DNA"/>
</dbReference>
<dbReference type="RefSeq" id="WP_011308956.1">
    <property type="nucleotide sequence ID" value="NC_007356.1"/>
</dbReference>
<dbReference type="SMR" id="Q3ZZG5"/>
<dbReference type="KEGG" id="deh:cbdbA388"/>
<dbReference type="HOGENOM" id="CLU_005314_3_0_0"/>
<dbReference type="Proteomes" id="UP000000433">
    <property type="component" value="Chromosome"/>
</dbReference>
<dbReference type="GO" id="GO:0031522">
    <property type="term" value="C:cell envelope Sec protein transport complex"/>
    <property type="evidence" value="ECO:0007669"/>
    <property type="project" value="TreeGrafter"/>
</dbReference>
<dbReference type="GO" id="GO:0005829">
    <property type="term" value="C:cytosol"/>
    <property type="evidence" value="ECO:0007669"/>
    <property type="project" value="TreeGrafter"/>
</dbReference>
<dbReference type="GO" id="GO:0005886">
    <property type="term" value="C:plasma membrane"/>
    <property type="evidence" value="ECO:0007669"/>
    <property type="project" value="UniProtKB-SubCell"/>
</dbReference>
<dbReference type="GO" id="GO:0005524">
    <property type="term" value="F:ATP binding"/>
    <property type="evidence" value="ECO:0007669"/>
    <property type="project" value="UniProtKB-UniRule"/>
</dbReference>
<dbReference type="GO" id="GO:0046872">
    <property type="term" value="F:metal ion binding"/>
    <property type="evidence" value="ECO:0007669"/>
    <property type="project" value="UniProtKB-KW"/>
</dbReference>
<dbReference type="GO" id="GO:0008564">
    <property type="term" value="F:protein-exporting ATPase activity"/>
    <property type="evidence" value="ECO:0007669"/>
    <property type="project" value="UniProtKB-EC"/>
</dbReference>
<dbReference type="GO" id="GO:0065002">
    <property type="term" value="P:intracellular protein transmembrane transport"/>
    <property type="evidence" value="ECO:0007669"/>
    <property type="project" value="UniProtKB-UniRule"/>
</dbReference>
<dbReference type="GO" id="GO:0017038">
    <property type="term" value="P:protein import"/>
    <property type="evidence" value="ECO:0007669"/>
    <property type="project" value="InterPro"/>
</dbReference>
<dbReference type="GO" id="GO:0006605">
    <property type="term" value="P:protein targeting"/>
    <property type="evidence" value="ECO:0007669"/>
    <property type="project" value="UniProtKB-UniRule"/>
</dbReference>
<dbReference type="GO" id="GO:0043952">
    <property type="term" value="P:protein transport by the Sec complex"/>
    <property type="evidence" value="ECO:0007669"/>
    <property type="project" value="TreeGrafter"/>
</dbReference>
<dbReference type="CDD" id="cd17928">
    <property type="entry name" value="DEXDc_SecA"/>
    <property type="match status" value="1"/>
</dbReference>
<dbReference type="CDD" id="cd18803">
    <property type="entry name" value="SF2_C_secA"/>
    <property type="match status" value="1"/>
</dbReference>
<dbReference type="FunFam" id="3.40.50.300:FF:000113">
    <property type="entry name" value="Preprotein translocase subunit SecA"/>
    <property type="match status" value="1"/>
</dbReference>
<dbReference type="FunFam" id="3.90.1440.10:FF:000001">
    <property type="entry name" value="Preprotein translocase subunit SecA"/>
    <property type="match status" value="1"/>
</dbReference>
<dbReference type="Gene3D" id="1.10.3060.10">
    <property type="entry name" value="Helical scaffold and wing domains of SecA"/>
    <property type="match status" value="1"/>
</dbReference>
<dbReference type="Gene3D" id="3.40.50.300">
    <property type="entry name" value="P-loop containing nucleotide triphosphate hydrolases"/>
    <property type="match status" value="2"/>
</dbReference>
<dbReference type="Gene3D" id="3.90.1440.10">
    <property type="entry name" value="SecA, preprotein cross-linking domain"/>
    <property type="match status" value="1"/>
</dbReference>
<dbReference type="HAMAP" id="MF_01382">
    <property type="entry name" value="SecA"/>
    <property type="match status" value="1"/>
</dbReference>
<dbReference type="InterPro" id="IPR014001">
    <property type="entry name" value="Helicase_ATP-bd"/>
</dbReference>
<dbReference type="InterPro" id="IPR001650">
    <property type="entry name" value="Helicase_C-like"/>
</dbReference>
<dbReference type="InterPro" id="IPR027417">
    <property type="entry name" value="P-loop_NTPase"/>
</dbReference>
<dbReference type="InterPro" id="IPR004027">
    <property type="entry name" value="SEC_C_motif"/>
</dbReference>
<dbReference type="InterPro" id="IPR000185">
    <property type="entry name" value="SecA"/>
</dbReference>
<dbReference type="InterPro" id="IPR020937">
    <property type="entry name" value="SecA_CS"/>
</dbReference>
<dbReference type="InterPro" id="IPR011115">
    <property type="entry name" value="SecA_DEAD"/>
</dbReference>
<dbReference type="InterPro" id="IPR014018">
    <property type="entry name" value="SecA_motor_DEAD"/>
</dbReference>
<dbReference type="InterPro" id="IPR011130">
    <property type="entry name" value="SecA_preprotein_X-link_dom"/>
</dbReference>
<dbReference type="InterPro" id="IPR044722">
    <property type="entry name" value="SecA_SF2_C"/>
</dbReference>
<dbReference type="InterPro" id="IPR011116">
    <property type="entry name" value="SecA_Wing/Scaffold"/>
</dbReference>
<dbReference type="InterPro" id="IPR036266">
    <property type="entry name" value="SecA_Wing/Scaffold_sf"/>
</dbReference>
<dbReference type="InterPro" id="IPR036670">
    <property type="entry name" value="SecA_X-link_sf"/>
</dbReference>
<dbReference type="NCBIfam" id="NF009538">
    <property type="entry name" value="PRK12904.1"/>
    <property type="match status" value="1"/>
</dbReference>
<dbReference type="NCBIfam" id="TIGR00963">
    <property type="entry name" value="secA"/>
    <property type="match status" value="1"/>
</dbReference>
<dbReference type="PANTHER" id="PTHR30612:SF0">
    <property type="entry name" value="CHLOROPLAST PROTEIN-TRANSPORTING ATPASE"/>
    <property type="match status" value="1"/>
</dbReference>
<dbReference type="PANTHER" id="PTHR30612">
    <property type="entry name" value="SECA INNER MEMBRANE COMPONENT OF SEC PROTEIN SECRETION SYSTEM"/>
    <property type="match status" value="1"/>
</dbReference>
<dbReference type="Pfam" id="PF21090">
    <property type="entry name" value="P-loop_SecA"/>
    <property type="match status" value="1"/>
</dbReference>
<dbReference type="Pfam" id="PF02810">
    <property type="entry name" value="SEC-C"/>
    <property type="match status" value="1"/>
</dbReference>
<dbReference type="Pfam" id="PF07517">
    <property type="entry name" value="SecA_DEAD"/>
    <property type="match status" value="1"/>
</dbReference>
<dbReference type="Pfam" id="PF01043">
    <property type="entry name" value="SecA_PP_bind"/>
    <property type="match status" value="1"/>
</dbReference>
<dbReference type="Pfam" id="PF07516">
    <property type="entry name" value="SecA_SW"/>
    <property type="match status" value="1"/>
</dbReference>
<dbReference type="PRINTS" id="PR00906">
    <property type="entry name" value="SECA"/>
</dbReference>
<dbReference type="SMART" id="SM00957">
    <property type="entry name" value="SecA_DEAD"/>
    <property type="match status" value="1"/>
</dbReference>
<dbReference type="SMART" id="SM00958">
    <property type="entry name" value="SecA_PP_bind"/>
    <property type="match status" value="1"/>
</dbReference>
<dbReference type="SUPFAM" id="SSF81886">
    <property type="entry name" value="Helical scaffold and wing domains of SecA"/>
    <property type="match status" value="1"/>
</dbReference>
<dbReference type="SUPFAM" id="SSF52540">
    <property type="entry name" value="P-loop containing nucleoside triphosphate hydrolases"/>
    <property type="match status" value="2"/>
</dbReference>
<dbReference type="SUPFAM" id="SSF81767">
    <property type="entry name" value="Pre-protein crosslinking domain of SecA"/>
    <property type="match status" value="1"/>
</dbReference>
<dbReference type="PROSITE" id="PS01312">
    <property type="entry name" value="SECA"/>
    <property type="match status" value="1"/>
</dbReference>
<dbReference type="PROSITE" id="PS51196">
    <property type="entry name" value="SECA_MOTOR_DEAD"/>
    <property type="match status" value="1"/>
</dbReference>
<comment type="function">
    <text evidence="1">Part of the Sec protein translocase complex. Interacts with the SecYEG preprotein conducting channel. Has a central role in coupling the hydrolysis of ATP to the transfer of proteins into and across the cell membrane, serving as an ATP-driven molecular motor driving the stepwise translocation of polypeptide chains across the membrane.</text>
</comment>
<comment type="catalytic activity">
    <reaction evidence="1">
        <text>ATP + H2O + cellular proteinSide 1 = ADP + phosphate + cellular proteinSide 2.</text>
        <dbReference type="EC" id="7.4.2.8"/>
    </reaction>
</comment>
<comment type="cofactor">
    <cofactor evidence="1">
        <name>Zn(2+)</name>
        <dbReference type="ChEBI" id="CHEBI:29105"/>
    </cofactor>
    <text evidence="1">May bind 1 zinc ion per subunit.</text>
</comment>
<comment type="subunit">
    <text evidence="1">Monomer and homodimer. Part of the essential Sec protein translocation apparatus which comprises SecA, SecYEG and auxiliary proteins SecDF. Other proteins may also be involved.</text>
</comment>
<comment type="subcellular location">
    <subcellularLocation>
        <location evidence="1">Cell membrane</location>
        <topology evidence="1">Peripheral membrane protein</topology>
        <orientation evidence="1">Cytoplasmic side</orientation>
    </subcellularLocation>
    <subcellularLocation>
        <location evidence="1">Cytoplasm</location>
    </subcellularLocation>
    <text evidence="1">Distribution is 50-50.</text>
</comment>
<comment type="similarity">
    <text evidence="1">Belongs to the SecA family.</text>
</comment>
<gene>
    <name evidence="1" type="primary">secA</name>
    <name type="ordered locus">cbdbA388</name>
</gene>
<feature type="chain" id="PRO_0000320790" description="Protein translocase subunit SecA">
    <location>
        <begin position="1"/>
        <end position="952"/>
    </location>
</feature>
<feature type="region of interest" description="Disordered" evidence="2">
    <location>
        <begin position="907"/>
        <end position="946"/>
    </location>
</feature>
<feature type="compositionally biased region" description="Low complexity" evidence="2">
    <location>
        <begin position="907"/>
        <end position="921"/>
    </location>
</feature>
<feature type="binding site" evidence="1">
    <location>
        <position position="135"/>
    </location>
    <ligand>
        <name>ATP</name>
        <dbReference type="ChEBI" id="CHEBI:30616"/>
    </ligand>
</feature>
<feature type="binding site" evidence="1">
    <location>
        <begin position="153"/>
        <end position="157"/>
    </location>
    <ligand>
        <name>ATP</name>
        <dbReference type="ChEBI" id="CHEBI:30616"/>
    </ligand>
</feature>
<feature type="binding site" evidence="1">
    <location>
        <position position="575"/>
    </location>
    <ligand>
        <name>ATP</name>
        <dbReference type="ChEBI" id="CHEBI:30616"/>
    </ligand>
</feature>
<feature type="binding site" evidence="1">
    <location>
        <position position="938"/>
    </location>
    <ligand>
        <name>Zn(2+)</name>
        <dbReference type="ChEBI" id="CHEBI:29105"/>
    </ligand>
</feature>
<feature type="binding site" evidence="1">
    <location>
        <position position="940"/>
    </location>
    <ligand>
        <name>Zn(2+)</name>
        <dbReference type="ChEBI" id="CHEBI:29105"/>
    </ligand>
</feature>
<feature type="binding site" evidence="1">
    <location>
        <position position="949"/>
    </location>
    <ligand>
        <name>Zn(2+)</name>
        <dbReference type="ChEBI" id="CHEBI:29105"/>
    </ligand>
</feature>
<feature type="binding site" evidence="1">
    <location>
        <position position="950"/>
    </location>
    <ligand>
        <name>Zn(2+)</name>
        <dbReference type="ChEBI" id="CHEBI:29105"/>
    </ligand>
</feature>
<name>SECA_DEHMC</name>
<protein>
    <recommendedName>
        <fullName evidence="1">Protein translocase subunit SecA</fullName>
        <ecNumber evidence="1">7.4.2.8</ecNumber>
    </recommendedName>
</protein>
<organism>
    <name type="scientific">Dehalococcoides mccartyi (strain CBDB1)</name>
    <dbReference type="NCBI Taxonomy" id="255470"/>
    <lineage>
        <taxon>Bacteria</taxon>
        <taxon>Bacillati</taxon>
        <taxon>Chloroflexota</taxon>
        <taxon>Dehalococcoidia</taxon>
        <taxon>Dehalococcoidales</taxon>
        <taxon>Dehalococcoidaceae</taxon>
        <taxon>Dehalococcoides</taxon>
    </lineage>
</organism>
<accession>Q3ZZG5</accession>
<proteinExistence type="inferred from homology"/>
<evidence type="ECO:0000255" key="1">
    <source>
        <dbReference type="HAMAP-Rule" id="MF_01382"/>
    </source>
</evidence>
<evidence type="ECO:0000256" key="2">
    <source>
        <dbReference type="SAM" id="MobiDB-lite"/>
    </source>
</evidence>
<keyword id="KW-0067">ATP-binding</keyword>
<keyword id="KW-1003">Cell membrane</keyword>
<keyword id="KW-0963">Cytoplasm</keyword>
<keyword id="KW-0472">Membrane</keyword>
<keyword id="KW-0479">Metal-binding</keyword>
<keyword id="KW-0547">Nucleotide-binding</keyword>
<keyword id="KW-0653">Protein transport</keyword>
<keyword id="KW-1278">Translocase</keyword>
<keyword id="KW-0811">Translocation</keyword>
<keyword id="KW-0813">Transport</keyword>
<keyword id="KW-0862">Zinc</keyword>